<comment type="function">
    <text evidence="1">Catalyzes the decarboxylation of four acetate groups of uroporphyrinogen-III to yield coproporphyrinogen-III.</text>
</comment>
<comment type="catalytic activity">
    <reaction evidence="1">
        <text>uroporphyrinogen III + 4 H(+) = coproporphyrinogen III + 4 CO2</text>
        <dbReference type="Rhea" id="RHEA:19865"/>
        <dbReference type="ChEBI" id="CHEBI:15378"/>
        <dbReference type="ChEBI" id="CHEBI:16526"/>
        <dbReference type="ChEBI" id="CHEBI:57308"/>
        <dbReference type="ChEBI" id="CHEBI:57309"/>
        <dbReference type="EC" id="4.1.1.37"/>
    </reaction>
</comment>
<comment type="pathway">
    <text evidence="1">Porphyrin-containing compound metabolism; protoporphyrin-IX biosynthesis; coproporphyrinogen-III from 5-aminolevulinate: step 4/4.</text>
</comment>
<comment type="subunit">
    <text evidence="1">Homodimer.</text>
</comment>
<comment type="subcellular location">
    <subcellularLocation>
        <location evidence="1">Cytoplasm</location>
    </subcellularLocation>
</comment>
<comment type="similarity">
    <text evidence="1">Belongs to the uroporphyrinogen decarboxylase family.</text>
</comment>
<feature type="chain" id="PRO_1000197505" description="Uroporphyrinogen decarboxylase">
    <location>
        <begin position="1"/>
        <end position="357"/>
    </location>
</feature>
<feature type="binding site" evidence="1">
    <location>
        <begin position="27"/>
        <end position="31"/>
    </location>
    <ligand>
        <name>substrate</name>
    </ligand>
</feature>
<feature type="binding site" evidence="1">
    <location>
        <position position="77"/>
    </location>
    <ligand>
        <name>substrate</name>
    </ligand>
</feature>
<feature type="binding site" evidence="1">
    <location>
        <position position="154"/>
    </location>
    <ligand>
        <name>substrate</name>
    </ligand>
</feature>
<feature type="binding site" evidence="1">
    <location>
        <position position="209"/>
    </location>
    <ligand>
        <name>substrate</name>
    </ligand>
</feature>
<feature type="binding site" evidence="1">
    <location>
        <position position="330"/>
    </location>
    <ligand>
        <name>substrate</name>
    </ligand>
</feature>
<feature type="site" description="Transition state stabilizer" evidence="1">
    <location>
        <position position="77"/>
    </location>
</feature>
<dbReference type="EC" id="4.1.1.37" evidence="1"/>
<dbReference type="EMBL" id="CP001182">
    <property type="protein sequence ID" value="ACJ42150.1"/>
    <property type="molecule type" value="Genomic_DNA"/>
</dbReference>
<dbReference type="RefSeq" id="WP_000209397.1">
    <property type="nucleotide sequence ID" value="NC_011586.2"/>
</dbReference>
<dbReference type="SMR" id="B7I451"/>
<dbReference type="GeneID" id="92894697"/>
<dbReference type="KEGG" id="abn:AB57_2800"/>
<dbReference type="HOGENOM" id="CLU_040933_0_0_6"/>
<dbReference type="UniPathway" id="UPA00251">
    <property type="reaction ID" value="UER00321"/>
</dbReference>
<dbReference type="Proteomes" id="UP000007094">
    <property type="component" value="Chromosome"/>
</dbReference>
<dbReference type="GO" id="GO:0005829">
    <property type="term" value="C:cytosol"/>
    <property type="evidence" value="ECO:0007669"/>
    <property type="project" value="TreeGrafter"/>
</dbReference>
<dbReference type="GO" id="GO:0004853">
    <property type="term" value="F:uroporphyrinogen decarboxylase activity"/>
    <property type="evidence" value="ECO:0007669"/>
    <property type="project" value="UniProtKB-UniRule"/>
</dbReference>
<dbReference type="GO" id="GO:0019353">
    <property type="term" value="P:protoporphyrinogen IX biosynthetic process from glutamate"/>
    <property type="evidence" value="ECO:0007669"/>
    <property type="project" value="TreeGrafter"/>
</dbReference>
<dbReference type="CDD" id="cd00717">
    <property type="entry name" value="URO-D"/>
    <property type="match status" value="1"/>
</dbReference>
<dbReference type="FunFam" id="3.20.20.210:FF:000001">
    <property type="entry name" value="Uroporphyrinogen decarboxylase"/>
    <property type="match status" value="1"/>
</dbReference>
<dbReference type="Gene3D" id="3.20.20.210">
    <property type="match status" value="1"/>
</dbReference>
<dbReference type="HAMAP" id="MF_00218">
    <property type="entry name" value="URO_D"/>
    <property type="match status" value="1"/>
</dbReference>
<dbReference type="InterPro" id="IPR038071">
    <property type="entry name" value="UROD/MetE-like_sf"/>
</dbReference>
<dbReference type="InterPro" id="IPR006361">
    <property type="entry name" value="Uroporphyrinogen_deCO2ase_HemE"/>
</dbReference>
<dbReference type="InterPro" id="IPR000257">
    <property type="entry name" value="Uroporphyrinogen_deCOase"/>
</dbReference>
<dbReference type="NCBIfam" id="TIGR01464">
    <property type="entry name" value="hemE"/>
    <property type="match status" value="1"/>
</dbReference>
<dbReference type="PANTHER" id="PTHR21091">
    <property type="entry name" value="METHYLTETRAHYDROFOLATE:HOMOCYSTEINE METHYLTRANSFERASE RELATED"/>
    <property type="match status" value="1"/>
</dbReference>
<dbReference type="PANTHER" id="PTHR21091:SF169">
    <property type="entry name" value="UROPORPHYRINOGEN DECARBOXYLASE"/>
    <property type="match status" value="1"/>
</dbReference>
<dbReference type="Pfam" id="PF01208">
    <property type="entry name" value="URO-D"/>
    <property type="match status" value="1"/>
</dbReference>
<dbReference type="SUPFAM" id="SSF51726">
    <property type="entry name" value="UROD/MetE-like"/>
    <property type="match status" value="1"/>
</dbReference>
<dbReference type="PROSITE" id="PS00906">
    <property type="entry name" value="UROD_1"/>
    <property type="match status" value="1"/>
</dbReference>
<dbReference type="PROSITE" id="PS00907">
    <property type="entry name" value="UROD_2"/>
    <property type="match status" value="1"/>
</dbReference>
<protein>
    <recommendedName>
        <fullName evidence="1">Uroporphyrinogen decarboxylase</fullName>
        <shortName evidence="1">UPD</shortName>
        <shortName evidence="1">URO-D</shortName>
        <ecNumber evidence="1">4.1.1.37</ecNumber>
    </recommendedName>
</protein>
<gene>
    <name evidence="1" type="primary">hemE</name>
    <name type="ordered locus">AB57_2800</name>
</gene>
<reference key="1">
    <citation type="journal article" date="2008" name="J. Bacteriol.">
        <title>Comparative genome sequence analysis of multidrug-resistant Acinetobacter baumannii.</title>
        <authorList>
            <person name="Adams M.D."/>
            <person name="Goglin K."/>
            <person name="Molyneaux N."/>
            <person name="Hujer K.M."/>
            <person name="Lavender H."/>
            <person name="Jamison J.J."/>
            <person name="MacDonald I.J."/>
            <person name="Martin K.M."/>
            <person name="Russo T."/>
            <person name="Campagnari A.A."/>
            <person name="Hujer A.M."/>
            <person name="Bonomo R.A."/>
            <person name="Gill S.R."/>
        </authorList>
    </citation>
    <scope>NUCLEOTIDE SEQUENCE [LARGE SCALE GENOMIC DNA]</scope>
    <source>
        <strain>AB0057</strain>
    </source>
</reference>
<accession>B7I451</accession>
<sequence>MTTLKNDRFLRALLREPVDTTPIWMMRQAGRYLPEYRETRSKAGDFLSLCKNTEFACEVTLQPLRRYDLDAAILFSDILTIPDALGLGLYFETGEGPKFHKTVRTEQDVANLPKLNAKADLDYVMNAVSTIRSALGGQVPLIGFSGSPWTLATYMVEGGSSKEFRFTKQMMYAQPEVLHALLDHLADSVIDYLNAQIDAGAQAIQIFDSWGGALAHREYVEFSLNYMKKIIAGLQREKDGRRIPVIVFTKGGGQWLEPMITTGADALGLDWTTPLNTARTTVAGRVALQGNLDPAVLYGSAASIEKAVKAMLDDAYANGEKTGYVANLGHGITQWVDPAQPKIFVDTVHEYSAKYLG</sequence>
<name>DCUP_ACIB5</name>
<organism>
    <name type="scientific">Acinetobacter baumannii (strain AB0057)</name>
    <dbReference type="NCBI Taxonomy" id="480119"/>
    <lineage>
        <taxon>Bacteria</taxon>
        <taxon>Pseudomonadati</taxon>
        <taxon>Pseudomonadota</taxon>
        <taxon>Gammaproteobacteria</taxon>
        <taxon>Moraxellales</taxon>
        <taxon>Moraxellaceae</taxon>
        <taxon>Acinetobacter</taxon>
        <taxon>Acinetobacter calcoaceticus/baumannii complex</taxon>
    </lineage>
</organism>
<evidence type="ECO:0000255" key="1">
    <source>
        <dbReference type="HAMAP-Rule" id="MF_00218"/>
    </source>
</evidence>
<proteinExistence type="inferred from homology"/>
<keyword id="KW-0963">Cytoplasm</keyword>
<keyword id="KW-0210">Decarboxylase</keyword>
<keyword id="KW-0456">Lyase</keyword>
<keyword id="KW-0627">Porphyrin biosynthesis</keyword>